<feature type="chain" id="PRO_1000016410" description="Histidine--tRNA ligase">
    <location>
        <begin position="1"/>
        <end position="423"/>
    </location>
</feature>
<organism>
    <name type="scientific">Prochlorococcus marinus (strain NATL1A)</name>
    <dbReference type="NCBI Taxonomy" id="167555"/>
    <lineage>
        <taxon>Bacteria</taxon>
        <taxon>Bacillati</taxon>
        <taxon>Cyanobacteriota</taxon>
        <taxon>Cyanophyceae</taxon>
        <taxon>Synechococcales</taxon>
        <taxon>Prochlorococcaceae</taxon>
        <taxon>Prochlorococcus</taxon>
    </lineage>
</organism>
<protein>
    <recommendedName>
        <fullName evidence="1">Histidine--tRNA ligase</fullName>
        <ecNumber evidence="1">6.1.1.21</ecNumber>
    </recommendedName>
    <alternativeName>
        <fullName evidence="1">Histidyl-tRNA synthetase</fullName>
        <shortName evidence="1">HisRS</shortName>
    </alternativeName>
</protein>
<evidence type="ECO:0000255" key="1">
    <source>
        <dbReference type="HAMAP-Rule" id="MF_00127"/>
    </source>
</evidence>
<sequence>MTNLKNLRGMLDLLPAQSQGWQKVESIALEHFSRAGLQEIRTPILEQTELFSRGIGENTDVVGKEMYSFDDRGGRSCTLRPEGTAPVARSIIQHGLLNNGPQRLWYRGPMFRYERPQAGRQRQFHQIGVEFVGLASVMSDAEVISIAWNFLKDVGLNDLTLEINSLGSNEDRNIFKEELKDWLNQRFDLLDEDSQKRINVNPLRILDSKNNSTKELLSEAPSLNDFLSSESKTRFDYLQELLVNLKIPYKINYNLVRGLDYYSHTAFEITSDHLGSQATVCGGGRYDGLISELGGPQAPSIGWAIGMERLVILAGDKILQTKSPDVYVIHKGKKAEQLALEITCQLRSSNLIIELDYSGSSFSKQFKRADKSRAKWALVIGEDEVSKGQLLMKKLRDKQKDEESREYIFSKGDLDQLIKKLIA</sequence>
<name>SYH_PROM1</name>
<proteinExistence type="inferred from homology"/>
<keyword id="KW-0030">Aminoacyl-tRNA synthetase</keyword>
<keyword id="KW-0067">ATP-binding</keyword>
<keyword id="KW-0963">Cytoplasm</keyword>
<keyword id="KW-0436">Ligase</keyword>
<keyword id="KW-0547">Nucleotide-binding</keyword>
<keyword id="KW-0648">Protein biosynthesis</keyword>
<gene>
    <name evidence="1" type="primary">hisS</name>
    <name type="ordered locus">NATL1_06821</name>
</gene>
<comment type="catalytic activity">
    <reaction evidence="1">
        <text>tRNA(His) + L-histidine + ATP = L-histidyl-tRNA(His) + AMP + diphosphate + H(+)</text>
        <dbReference type="Rhea" id="RHEA:17313"/>
        <dbReference type="Rhea" id="RHEA-COMP:9665"/>
        <dbReference type="Rhea" id="RHEA-COMP:9689"/>
        <dbReference type="ChEBI" id="CHEBI:15378"/>
        <dbReference type="ChEBI" id="CHEBI:30616"/>
        <dbReference type="ChEBI" id="CHEBI:33019"/>
        <dbReference type="ChEBI" id="CHEBI:57595"/>
        <dbReference type="ChEBI" id="CHEBI:78442"/>
        <dbReference type="ChEBI" id="CHEBI:78527"/>
        <dbReference type="ChEBI" id="CHEBI:456215"/>
        <dbReference type="EC" id="6.1.1.21"/>
    </reaction>
</comment>
<comment type="subunit">
    <text evidence="1">Homodimer.</text>
</comment>
<comment type="subcellular location">
    <subcellularLocation>
        <location evidence="1">Cytoplasm</location>
    </subcellularLocation>
</comment>
<comment type="similarity">
    <text evidence="1">Belongs to the class-II aminoacyl-tRNA synthetase family.</text>
</comment>
<accession>A2C182</accession>
<dbReference type="EC" id="6.1.1.21" evidence="1"/>
<dbReference type="EMBL" id="CP000553">
    <property type="protein sequence ID" value="ABM75242.1"/>
    <property type="molecule type" value="Genomic_DNA"/>
</dbReference>
<dbReference type="RefSeq" id="WP_011823403.1">
    <property type="nucleotide sequence ID" value="NC_008819.1"/>
</dbReference>
<dbReference type="SMR" id="A2C182"/>
<dbReference type="KEGG" id="pme:NATL1_06821"/>
<dbReference type="eggNOG" id="COG0124">
    <property type="taxonomic scope" value="Bacteria"/>
</dbReference>
<dbReference type="HOGENOM" id="CLU_025113_1_1_3"/>
<dbReference type="Proteomes" id="UP000002592">
    <property type="component" value="Chromosome"/>
</dbReference>
<dbReference type="GO" id="GO:0005737">
    <property type="term" value="C:cytoplasm"/>
    <property type="evidence" value="ECO:0007669"/>
    <property type="project" value="UniProtKB-SubCell"/>
</dbReference>
<dbReference type="GO" id="GO:0005524">
    <property type="term" value="F:ATP binding"/>
    <property type="evidence" value="ECO:0007669"/>
    <property type="project" value="UniProtKB-UniRule"/>
</dbReference>
<dbReference type="GO" id="GO:0004821">
    <property type="term" value="F:histidine-tRNA ligase activity"/>
    <property type="evidence" value="ECO:0007669"/>
    <property type="project" value="UniProtKB-UniRule"/>
</dbReference>
<dbReference type="GO" id="GO:0006427">
    <property type="term" value="P:histidyl-tRNA aminoacylation"/>
    <property type="evidence" value="ECO:0007669"/>
    <property type="project" value="UniProtKB-UniRule"/>
</dbReference>
<dbReference type="CDD" id="cd00773">
    <property type="entry name" value="HisRS-like_core"/>
    <property type="match status" value="1"/>
</dbReference>
<dbReference type="CDD" id="cd00859">
    <property type="entry name" value="HisRS_anticodon"/>
    <property type="match status" value="1"/>
</dbReference>
<dbReference type="Gene3D" id="3.40.50.800">
    <property type="entry name" value="Anticodon-binding domain"/>
    <property type="match status" value="1"/>
</dbReference>
<dbReference type="Gene3D" id="3.30.930.10">
    <property type="entry name" value="Bira Bifunctional Protein, Domain 2"/>
    <property type="match status" value="1"/>
</dbReference>
<dbReference type="HAMAP" id="MF_00127">
    <property type="entry name" value="His_tRNA_synth"/>
    <property type="match status" value="1"/>
</dbReference>
<dbReference type="InterPro" id="IPR006195">
    <property type="entry name" value="aa-tRNA-synth_II"/>
</dbReference>
<dbReference type="InterPro" id="IPR045864">
    <property type="entry name" value="aa-tRNA-synth_II/BPL/LPL"/>
</dbReference>
<dbReference type="InterPro" id="IPR004154">
    <property type="entry name" value="Anticodon-bd"/>
</dbReference>
<dbReference type="InterPro" id="IPR036621">
    <property type="entry name" value="Anticodon-bd_dom_sf"/>
</dbReference>
<dbReference type="InterPro" id="IPR015807">
    <property type="entry name" value="His-tRNA-ligase"/>
</dbReference>
<dbReference type="InterPro" id="IPR041715">
    <property type="entry name" value="HisRS-like_core"/>
</dbReference>
<dbReference type="InterPro" id="IPR004516">
    <property type="entry name" value="HisRS/HisZ"/>
</dbReference>
<dbReference type="InterPro" id="IPR033656">
    <property type="entry name" value="HisRS_anticodon"/>
</dbReference>
<dbReference type="NCBIfam" id="TIGR00442">
    <property type="entry name" value="hisS"/>
    <property type="match status" value="1"/>
</dbReference>
<dbReference type="PANTHER" id="PTHR43707:SF1">
    <property type="entry name" value="HISTIDINE--TRNA LIGASE, MITOCHONDRIAL-RELATED"/>
    <property type="match status" value="1"/>
</dbReference>
<dbReference type="PANTHER" id="PTHR43707">
    <property type="entry name" value="HISTIDYL-TRNA SYNTHETASE"/>
    <property type="match status" value="1"/>
</dbReference>
<dbReference type="Pfam" id="PF03129">
    <property type="entry name" value="HGTP_anticodon"/>
    <property type="match status" value="1"/>
</dbReference>
<dbReference type="Pfam" id="PF13393">
    <property type="entry name" value="tRNA-synt_His"/>
    <property type="match status" value="1"/>
</dbReference>
<dbReference type="PIRSF" id="PIRSF001549">
    <property type="entry name" value="His-tRNA_synth"/>
    <property type="match status" value="1"/>
</dbReference>
<dbReference type="SUPFAM" id="SSF52954">
    <property type="entry name" value="Class II aaRS ABD-related"/>
    <property type="match status" value="1"/>
</dbReference>
<dbReference type="SUPFAM" id="SSF55681">
    <property type="entry name" value="Class II aaRS and biotin synthetases"/>
    <property type="match status" value="1"/>
</dbReference>
<dbReference type="PROSITE" id="PS50862">
    <property type="entry name" value="AA_TRNA_LIGASE_II"/>
    <property type="match status" value="1"/>
</dbReference>
<reference key="1">
    <citation type="journal article" date="2007" name="PLoS Genet.">
        <title>Patterns and implications of gene gain and loss in the evolution of Prochlorococcus.</title>
        <authorList>
            <person name="Kettler G.C."/>
            <person name="Martiny A.C."/>
            <person name="Huang K."/>
            <person name="Zucker J."/>
            <person name="Coleman M.L."/>
            <person name="Rodrigue S."/>
            <person name="Chen F."/>
            <person name="Lapidus A."/>
            <person name="Ferriera S."/>
            <person name="Johnson J."/>
            <person name="Steglich C."/>
            <person name="Church G.M."/>
            <person name="Richardson P."/>
            <person name="Chisholm S.W."/>
        </authorList>
    </citation>
    <scope>NUCLEOTIDE SEQUENCE [LARGE SCALE GENOMIC DNA]</scope>
    <source>
        <strain>NATL1A</strain>
    </source>
</reference>